<gene>
    <name evidence="1" type="primary">hisS</name>
    <name type="ordered locus">FTT_0052</name>
</gene>
<name>SYH_FRATT</name>
<accession>Q5NIL5</accession>
<evidence type="ECO:0000255" key="1">
    <source>
        <dbReference type="HAMAP-Rule" id="MF_00127"/>
    </source>
</evidence>
<reference key="1">
    <citation type="journal article" date="2005" name="Nat. Genet.">
        <title>The complete genome sequence of Francisella tularensis, the causative agent of tularemia.</title>
        <authorList>
            <person name="Larsson P."/>
            <person name="Oyston P.C.F."/>
            <person name="Chain P."/>
            <person name="Chu M.C."/>
            <person name="Duffield M."/>
            <person name="Fuxelius H.-H."/>
            <person name="Garcia E."/>
            <person name="Haelltorp G."/>
            <person name="Johansson D."/>
            <person name="Isherwood K.E."/>
            <person name="Karp P.D."/>
            <person name="Larsson E."/>
            <person name="Liu Y."/>
            <person name="Michell S."/>
            <person name="Prior J."/>
            <person name="Prior R."/>
            <person name="Malfatti S."/>
            <person name="Sjoestedt A."/>
            <person name="Svensson K."/>
            <person name="Thompson N."/>
            <person name="Vergez L."/>
            <person name="Wagg J.K."/>
            <person name="Wren B.W."/>
            <person name="Lindler L.E."/>
            <person name="Andersson S.G.E."/>
            <person name="Forsman M."/>
            <person name="Titball R.W."/>
        </authorList>
    </citation>
    <scope>NUCLEOTIDE SEQUENCE [LARGE SCALE GENOMIC DNA]</scope>
    <source>
        <strain>SCHU S4 / Schu 4</strain>
    </source>
</reference>
<protein>
    <recommendedName>
        <fullName evidence="1">Histidine--tRNA ligase</fullName>
        <ecNumber evidence="1">6.1.1.21</ecNumber>
    </recommendedName>
    <alternativeName>
        <fullName evidence="1">Histidyl-tRNA synthetase</fullName>
        <shortName evidence="1">HisRS</shortName>
    </alternativeName>
</protein>
<sequence length="421" mass="48226">MSKLTIVRGFNDVLPLDSYKWQLLESKVKLILDRYNYSETRLPIVERSELFHRSVGESSDIVSKETYDFQDRNGDSLTLRPEGTAGCVRMVIENNLATRGQTQKLWYCGPMFRYERPQKGRYRQFYQLGVEAYGFDGIAIDLEVIAIAWSLFKELGIYEYVTLELNSLGSSLNRQEYTQALLQYLKPYHAELDEDSIKRLDKNPLRILDSKIEKTQKILANAPKLIDFIDHDLRLRFKQTCQYLDALGVRYKLNENLVRGLDYYTGLVFEWTTDKLGSQSAICAGGRYDGLVENLGGQKTAAIGFAIGMERLLLLLEDLGKLPNQDNACDVFFILDSAQLHQSLAIVENIRQELPQLKIDMDLKFGSFKSQFKKADKSGAKVAIIIGQDELDNGFAGIKFLQQNEEQQQVAFNELINFLER</sequence>
<organism>
    <name type="scientific">Francisella tularensis subsp. tularensis (strain SCHU S4 / Schu 4)</name>
    <dbReference type="NCBI Taxonomy" id="177416"/>
    <lineage>
        <taxon>Bacteria</taxon>
        <taxon>Pseudomonadati</taxon>
        <taxon>Pseudomonadota</taxon>
        <taxon>Gammaproteobacteria</taxon>
        <taxon>Thiotrichales</taxon>
        <taxon>Francisellaceae</taxon>
        <taxon>Francisella</taxon>
    </lineage>
</organism>
<dbReference type="EC" id="6.1.1.21" evidence="1"/>
<dbReference type="EMBL" id="AJ749949">
    <property type="protein sequence ID" value="CAG44685.1"/>
    <property type="molecule type" value="Genomic_DNA"/>
</dbReference>
<dbReference type="RefSeq" id="WP_003019740.1">
    <property type="nucleotide sequence ID" value="NZ_CP010290.1"/>
</dbReference>
<dbReference type="RefSeq" id="YP_169127.1">
    <property type="nucleotide sequence ID" value="NC_006570.2"/>
</dbReference>
<dbReference type="SMR" id="Q5NIL5"/>
<dbReference type="STRING" id="177416.FTT_0052"/>
<dbReference type="DNASU" id="3192430"/>
<dbReference type="EnsemblBacteria" id="CAG44685">
    <property type="protein sequence ID" value="CAG44685"/>
    <property type="gene ID" value="FTT_0052"/>
</dbReference>
<dbReference type="KEGG" id="ftu:FTT_0052"/>
<dbReference type="eggNOG" id="COG0124">
    <property type="taxonomic scope" value="Bacteria"/>
</dbReference>
<dbReference type="OrthoDB" id="9800814at2"/>
<dbReference type="Proteomes" id="UP000001174">
    <property type="component" value="Chromosome"/>
</dbReference>
<dbReference type="GO" id="GO:0005737">
    <property type="term" value="C:cytoplasm"/>
    <property type="evidence" value="ECO:0007669"/>
    <property type="project" value="UniProtKB-SubCell"/>
</dbReference>
<dbReference type="GO" id="GO:0005524">
    <property type="term" value="F:ATP binding"/>
    <property type="evidence" value="ECO:0007669"/>
    <property type="project" value="UniProtKB-UniRule"/>
</dbReference>
<dbReference type="GO" id="GO:0004821">
    <property type="term" value="F:histidine-tRNA ligase activity"/>
    <property type="evidence" value="ECO:0007669"/>
    <property type="project" value="UniProtKB-UniRule"/>
</dbReference>
<dbReference type="GO" id="GO:0006427">
    <property type="term" value="P:histidyl-tRNA aminoacylation"/>
    <property type="evidence" value="ECO:0007669"/>
    <property type="project" value="UniProtKB-UniRule"/>
</dbReference>
<dbReference type="CDD" id="cd00773">
    <property type="entry name" value="HisRS-like_core"/>
    <property type="match status" value="1"/>
</dbReference>
<dbReference type="FunFam" id="3.30.930.10:FF:000005">
    <property type="entry name" value="Histidine--tRNA ligase"/>
    <property type="match status" value="1"/>
</dbReference>
<dbReference type="Gene3D" id="3.40.50.800">
    <property type="entry name" value="Anticodon-binding domain"/>
    <property type="match status" value="1"/>
</dbReference>
<dbReference type="Gene3D" id="3.30.930.10">
    <property type="entry name" value="Bira Bifunctional Protein, Domain 2"/>
    <property type="match status" value="1"/>
</dbReference>
<dbReference type="HAMAP" id="MF_00127">
    <property type="entry name" value="His_tRNA_synth"/>
    <property type="match status" value="1"/>
</dbReference>
<dbReference type="InterPro" id="IPR006195">
    <property type="entry name" value="aa-tRNA-synth_II"/>
</dbReference>
<dbReference type="InterPro" id="IPR045864">
    <property type="entry name" value="aa-tRNA-synth_II/BPL/LPL"/>
</dbReference>
<dbReference type="InterPro" id="IPR004154">
    <property type="entry name" value="Anticodon-bd"/>
</dbReference>
<dbReference type="InterPro" id="IPR036621">
    <property type="entry name" value="Anticodon-bd_dom_sf"/>
</dbReference>
<dbReference type="InterPro" id="IPR015807">
    <property type="entry name" value="His-tRNA-ligase"/>
</dbReference>
<dbReference type="InterPro" id="IPR041715">
    <property type="entry name" value="HisRS-like_core"/>
</dbReference>
<dbReference type="InterPro" id="IPR004516">
    <property type="entry name" value="HisRS/HisZ"/>
</dbReference>
<dbReference type="NCBIfam" id="TIGR00442">
    <property type="entry name" value="hisS"/>
    <property type="match status" value="1"/>
</dbReference>
<dbReference type="PANTHER" id="PTHR43707:SF1">
    <property type="entry name" value="HISTIDINE--TRNA LIGASE, MITOCHONDRIAL-RELATED"/>
    <property type="match status" value="1"/>
</dbReference>
<dbReference type="PANTHER" id="PTHR43707">
    <property type="entry name" value="HISTIDYL-TRNA SYNTHETASE"/>
    <property type="match status" value="1"/>
</dbReference>
<dbReference type="Pfam" id="PF03129">
    <property type="entry name" value="HGTP_anticodon"/>
    <property type="match status" value="1"/>
</dbReference>
<dbReference type="Pfam" id="PF13393">
    <property type="entry name" value="tRNA-synt_His"/>
    <property type="match status" value="1"/>
</dbReference>
<dbReference type="PIRSF" id="PIRSF001549">
    <property type="entry name" value="His-tRNA_synth"/>
    <property type="match status" value="1"/>
</dbReference>
<dbReference type="SUPFAM" id="SSF52954">
    <property type="entry name" value="Class II aaRS ABD-related"/>
    <property type="match status" value="1"/>
</dbReference>
<dbReference type="SUPFAM" id="SSF55681">
    <property type="entry name" value="Class II aaRS and biotin synthetases"/>
    <property type="match status" value="1"/>
</dbReference>
<dbReference type="PROSITE" id="PS50862">
    <property type="entry name" value="AA_TRNA_LIGASE_II"/>
    <property type="match status" value="1"/>
</dbReference>
<feature type="chain" id="PRO_0000136164" description="Histidine--tRNA ligase">
    <location>
        <begin position="1"/>
        <end position="421"/>
    </location>
</feature>
<comment type="catalytic activity">
    <reaction evidence="1">
        <text>tRNA(His) + L-histidine + ATP = L-histidyl-tRNA(His) + AMP + diphosphate + H(+)</text>
        <dbReference type="Rhea" id="RHEA:17313"/>
        <dbReference type="Rhea" id="RHEA-COMP:9665"/>
        <dbReference type="Rhea" id="RHEA-COMP:9689"/>
        <dbReference type="ChEBI" id="CHEBI:15378"/>
        <dbReference type="ChEBI" id="CHEBI:30616"/>
        <dbReference type="ChEBI" id="CHEBI:33019"/>
        <dbReference type="ChEBI" id="CHEBI:57595"/>
        <dbReference type="ChEBI" id="CHEBI:78442"/>
        <dbReference type="ChEBI" id="CHEBI:78527"/>
        <dbReference type="ChEBI" id="CHEBI:456215"/>
        <dbReference type="EC" id="6.1.1.21"/>
    </reaction>
</comment>
<comment type="subunit">
    <text evidence="1">Homodimer.</text>
</comment>
<comment type="subcellular location">
    <subcellularLocation>
        <location evidence="1">Cytoplasm</location>
    </subcellularLocation>
</comment>
<comment type="similarity">
    <text evidence="1">Belongs to the class-II aminoacyl-tRNA synthetase family.</text>
</comment>
<keyword id="KW-0030">Aminoacyl-tRNA synthetase</keyword>
<keyword id="KW-0067">ATP-binding</keyword>
<keyword id="KW-0963">Cytoplasm</keyword>
<keyword id="KW-0436">Ligase</keyword>
<keyword id="KW-0547">Nucleotide-binding</keyword>
<keyword id="KW-0648">Protein biosynthesis</keyword>
<keyword id="KW-1185">Reference proteome</keyword>
<proteinExistence type="inferred from homology"/>